<comment type="function">
    <text evidence="4">Endoglycosidase with broad specificity that cleaves the chitobiose core of high mannose and complex N-linked glycans. Is able to release N-glycans from diverse host glycoproteins such as human and bovine lactoferrin, immunoglobulins A and G, and ribonuclease B. Is active directly on human breast milk - a complex matrix of lipids, oligosaccharides, and proteins with disparate glycosylation types - successfully removing a significant proportion of the total amount of N-glycans. Does not recognize O-linked glycans or free human milk oligosaccharides (HMO).</text>
</comment>
<comment type="catalytic activity">
    <reaction evidence="4">
        <text>an N(4)-(oligosaccharide-(1-&gt;3)-[oligosaccharide-(1-&gt;6)]-beta-D-Man-(1-&gt;4)-beta-D-GlcNAc-(1-&gt;4)-alpha-D-GlcNAc)-L-asparaginyl-[protein] + H2O = an oligosaccharide-(1-&gt;3)-[oligosaccharide-(1-&gt;6)]-beta-D-Man-(1-&gt;4)-D-GlcNAc + N(4)-(N-acetyl-beta-D-glucosaminyl)-L-asparaginyl-[protein]</text>
        <dbReference type="Rhea" id="RHEA:73067"/>
        <dbReference type="Rhea" id="RHEA-COMP:12603"/>
        <dbReference type="Rhea" id="RHEA-COMP:18176"/>
        <dbReference type="ChEBI" id="CHEBI:15377"/>
        <dbReference type="ChEBI" id="CHEBI:132248"/>
        <dbReference type="ChEBI" id="CHEBI:192714"/>
        <dbReference type="ChEBI" id="CHEBI:192715"/>
        <dbReference type="EC" id="3.2.1.96"/>
    </reaction>
</comment>
<comment type="biophysicochemical properties">
    <phDependence>
        <text evidence="4">Optimum pH is 5.0.</text>
    </phDependence>
    <temperatureDependence>
        <text evidence="4">Optimum temperature is 30-45 degrees Celsius. Is heat-resistant, since the enzymatic activity is not significantly impaired by incubation at 95 degrees Celsius for 1 or 5 minutes.</text>
    </temperatureDependence>
</comment>
<comment type="subcellular location">
    <subcellularLocation>
        <location evidence="1">Cell membrane</location>
        <topology evidence="1">Single-pass membrane protein</topology>
    </subcellularLocation>
</comment>
<comment type="induction">
    <text evidence="4">Constitutively expressed. Is up-regulated when cells are grown on lactose (by comparison with cells grown on glucose), or when the bacterium is incubated with human or bovine lactoferrin.</text>
</comment>
<comment type="biotechnology">
    <text evidence="7">EndoBI-1 might prove useful as a novel tool for diverse applications in proteomics and glycoproteomics research.</text>
</comment>
<comment type="similarity">
    <text evidence="6">Belongs to the glycosyl hydrolase 18 family.</text>
</comment>
<feature type="signal peptide" evidence="1">
    <location>
        <begin position="1"/>
        <end position="36"/>
    </location>
</feature>
<feature type="chain" id="PRO_5000417322" description="Endo-beta-N-acetylglucosaminidase">
    <location>
        <begin position="37"/>
        <end position="545"/>
    </location>
</feature>
<feature type="transmembrane region" description="Helical" evidence="1">
    <location>
        <begin position="518"/>
        <end position="538"/>
    </location>
</feature>
<feature type="domain" description="GH18" evidence="2">
    <location>
        <begin position="51"/>
        <end position="333"/>
    </location>
</feature>
<feature type="region of interest" description="Disordered" evidence="3">
    <location>
        <begin position="486"/>
        <end position="511"/>
    </location>
</feature>
<feature type="active site" description="Proton donor" evidence="2">
    <location>
        <position position="184"/>
    </location>
</feature>
<feature type="mutagenesis site" description="Loss of enzymatic activity. Binds to the core of N-glycans, Man(3)GlcNAc(2). Also shows significant binding to the alpha1-6-fucosylated pentasaccharide, characteristic of human N-linked glycoproteins." evidence="4">
    <original>E</original>
    <variation>N</variation>
    <location>
        <position position="184"/>
    </location>
</feature>
<sequence length="545" mass="59826">MTFIKQMMPRYVASMTAGIVAAAMAATCAFAPVANADAVSPTQETIQSTGRHFMVYYRAWRDVTMKGVNTDLPDDNWISMYDIPYGVDVVNIFSYVPSGQEEQAQPFYDKLKSDYAPYLHSRGIKLVRGIDYTGVAVNGFRTFMKEQNKTESEATEADYDAYAKQVIDKYMISVGLDGLDIDMEAHPNDADVKISDNVIRALSKHIGPKSAKPDTTMFLYDTNGSYLNPFKNVAECFDYVAYQQYGSSSDRTARAAADYQPYIGNEFVPGLTFPEEGDMNNRWYDATEPYEESHFYQVASYVREHNLGGMFVYALDRDGRNYDEDLRRIVPSNLLWTKTAIAESEGMALDTAKTAANHYLDRMSLRQVIDDNAASADKARDMVGKAANLYETNKAVLGGDYGEGFSNTYDPTLEAGLLGIDISVLQQQIDKSSEIIGADTAESDAKTALRMARDAAIDGLTGKIYTADQVSAWSQALKAALDATVPVPTPDSTDQNGNRDKVTNHKVQGQPKQLSATGISTDIIVAVGVTLAIAGVALSLSRKLS</sequence>
<protein>
    <recommendedName>
        <fullName evidence="5">Endo-beta-N-acetylglucosaminidase</fullName>
        <ecNumber evidence="4">3.2.1.96</ecNumber>
    </recommendedName>
    <alternativeName>
        <fullName evidence="5">Endoglycosidase BI-1</fullName>
        <shortName evidence="5">EndoBI-1</shortName>
    </alternativeName>
</protein>
<proteinExistence type="evidence at protein level"/>
<keyword id="KW-0119">Carbohydrate metabolism</keyword>
<keyword id="KW-1003">Cell membrane</keyword>
<keyword id="KW-0326">Glycosidase</keyword>
<keyword id="KW-0378">Hydrolase</keyword>
<keyword id="KW-0472">Membrane</keyword>
<keyword id="KW-0732">Signal</keyword>
<keyword id="KW-0812">Transmembrane</keyword>
<keyword id="KW-1133">Transmembrane helix</keyword>
<dbReference type="EC" id="3.2.1.96" evidence="4"/>
<dbReference type="EMBL" id="CP001095">
    <property type="protein sequence ID" value="ACJ53522.1"/>
    <property type="molecule type" value="Genomic_DNA"/>
</dbReference>
<dbReference type="RefSeq" id="WP_012578681.1">
    <property type="nucleotide sequence ID" value="NZ_JDTT01000013.1"/>
</dbReference>
<dbReference type="SMR" id="B7GPC7"/>
<dbReference type="CAZy" id="GH18">
    <property type="family name" value="Glycoside Hydrolase Family 18"/>
</dbReference>
<dbReference type="KEGG" id="bln:Blon_2468"/>
<dbReference type="KEGG" id="blon:BLIJ_2539"/>
<dbReference type="PATRIC" id="fig|391904.8.peg.2542"/>
<dbReference type="BRENDA" id="3.2.1.96">
    <property type="organism ID" value="849"/>
</dbReference>
<dbReference type="Proteomes" id="UP000001360">
    <property type="component" value="Chromosome"/>
</dbReference>
<dbReference type="GO" id="GO:0005886">
    <property type="term" value="C:plasma membrane"/>
    <property type="evidence" value="ECO:0007669"/>
    <property type="project" value="UniProtKB-SubCell"/>
</dbReference>
<dbReference type="GO" id="GO:0033925">
    <property type="term" value="F:mannosyl-glycoprotein endo-beta-N-acetylglucosaminidase activity"/>
    <property type="evidence" value="ECO:0000314"/>
    <property type="project" value="UniProtKB"/>
</dbReference>
<dbReference type="GO" id="GO:0005975">
    <property type="term" value="P:carbohydrate metabolic process"/>
    <property type="evidence" value="ECO:0007669"/>
    <property type="project" value="InterPro"/>
</dbReference>
<dbReference type="GO" id="GO:0035977">
    <property type="term" value="P:protein deglycosylation involved in glycoprotein catabolic process"/>
    <property type="evidence" value="ECO:0000314"/>
    <property type="project" value="UniProtKB"/>
</dbReference>
<dbReference type="Gene3D" id="3.20.20.80">
    <property type="entry name" value="Glycosidases"/>
    <property type="match status" value="1"/>
</dbReference>
<dbReference type="InterPro" id="IPR057016">
    <property type="entry name" value="EndoS_F2-like_TIM-barrel"/>
</dbReference>
<dbReference type="InterPro" id="IPR001223">
    <property type="entry name" value="Glyco_hydro18_cat"/>
</dbReference>
<dbReference type="InterPro" id="IPR001579">
    <property type="entry name" value="Glyco_hydro_18_chit_AS"/>
</dbReference>
<dbReference type="InterPro" id="IPR017853">
    <property type="entry name" value="Glycoside_hydrolase_SF"/>
</dbReference>
<dbReference type="Pfam" id="PF23916">
    <property type="entry name" value="TIM-barrel_EndoS"/>
    <property type="match status" value="1"/>
</dbReference>
<dbReference type="SUPFAM" id="SSF51445">
    <property type="entry name" value="(Trans)glycosidases"/>
    <property type="match status" value="1"/>
</dbReference>
<dbReference type="PROSITE" id="PS01095">
    <property type="entry name" value="GH18_1"/>
    <property type="match status" value="1"/>
</dbReference>
<dbReference type="PROSITE" id="PS51910">
    <property type="entry name" value="GH18_2"/>
    <property type="match status" value="1"/>
</dbReference>
<gene>
    <name evidence="8" type="ordered locus">Blon_2468</name>
</gene>
<name>EBI1_BIFLS</name>
<accession>B7GPC7</accession>
<accession>E8MPN7</accession>
<evidence type="ECO:0000255" key="1"/>
<evidence type="ECO:0000255" key="2">
    <source>
        <dbReference type="PROSITE-ProRule" id="PRU01258"/>
    </source>
</evidence>
<evidence type="ECO:0000256" key="3">
    <source>
        <dbReference type="SAM" id="MobiDB-lite"/>
    </source>
</evidence>
<evidence type="ECO:0000269" key="4">
    <source>
    </source>
</evidence>
<evidence type="ECO:0000303" key="5">
    <source>
    </source>
</evidence>
<evidence type="ECO:0000305" key="6"/>
<evidence type="ECO:0000305" key="7">
    <source>
    </source>
</evidence>
<evidence type="ECO:0000312" key="8">
    <source>
        <dbReference type="EMBL" id="ACJ53522.1"/>
    </source>
</evidence>
<organism>
    <name type="scientific">Bifidobacterium longum subsp. infantis (strain ATCC 15697 / DSM 20088 / JCM 1222 / NCTC 11817 / S12)</name>
    <dbReference type="NCBI Taxonomy" id="391904"/>
    <lineage>
        <taxon>Bacteria</taxon>
        <taxon>Bacillati</taxon>
        <taxon>Actinomycetota</taxon>
        <taxon>Actinomycetes</taxon>
        <taxon>Bifidobacteriales</taxon>
        <taxon>Bifidobacteriaceae</taxon>
        <taxon>Bifidobacterium</taxon>
    </lineage>
</organism>
<reference key="1">
    <citation type="journal article" date="2008" name="Proc. Natl. Acad. Sci. U.S.A.">
        <title>The genome sequence of Bifidobacterium longum subsp. infantis reveals adaptations for milk utilization within the infant microbiome.</title>
        <authorList>
            <person name="Sela D.A."/>
            <person name="Chapman J."/>
            <person name="Adeuya A."/>
            <person name="Kim J.H."/>
            <person name="Chen F."/>
            <person name="Whitehead T.R."/>
            <person name="Lapidus A."/>
            <person name="Rokhsar D.S."/>
            <person name="Lebrilla C.B."/>
            <person name="German J.B."/>
            <person name="Price N.P."/>
            <person name="Richardson P.M."/>
            <person name="Mills D.A."/>
        </authorList>
    </citation>
    <scope>NUCLEOTIDE SEQUENCE [LARGE SCALE GENOMIC DNA]</scope>
    <source>
        <strain>ATCC 15697 / DSM 20088 / JCM 1222 / NCTC 11817 / S12</strain>
    </source>
</reference>
<reference key="2">
    <citation type="journal article" date="2012" name="Mol. Cell. Proteomics">
        <title>Endo-beta-N-acetylglucosaminidases from infant gut-associated bifidobacteria release complex N-glycans from human milk glycoproteins.</title>
        <authorList>
            <person name="Garrido D."/>
            <person name="Nwosu C."/>
            <person name="Ruiz-Moyano S."/>
            <person name="Aldredge D."/>
            <person name="German J.B."/>
            <person name="Lebrilla C.B."/>
            <person name="Mills D.A."/>
        </authorList>
    </citation>
    <scope>FUNCTION</scope>
    <scope>CATALYTIC ACTIVITY</scope>
    <scope>SUBSTRATE SPECIFICITY</scope>
    <scope>BIOPHYSICOCHEMICAL PROPERTIES</scope>
    <scope>INDUCTION</scope>
    <scope>MUTAGENESIS OF GLU-184</scope>
    <scope>BIOTECHNOLOGY</scope>
    <source>
        <strain>ATCC 15697 / DSM 20088 / JCM 1222 / NCTC 11817 / S12</strain>
    </source>
</reference>